<dbReference type="EMBL" id="X01633">
    <property type="status" value="NOT_ANNOTATED_CDS"/>
    <property type="molecule type" value="Genomic_DNA"/>
</dbReference>
<dbReference type="SMR" id="P0C649"/>
<dbReference type="Proteomes" id="UP000007779">
    <property type="component" value="Genome"/>
</dbReference>
<dbReference type="GO" id="GO:0033644">
    <property type="term" value="C:host cell membrane"/>
    <property type="evidence" value="ECO:0007669"/>
    <property type="project" value="UniProtKB-SubCell"/>
</dbReference>
<dbReference type="GO" id="GO:0016020">
    <property type="term" value="C:membrane"/>
    <property type="evidence" value="ECO:0007669"/>
    <property type="project" value="UniProtKB-KW"/>
</dbReference>
<dbReference type="GO" id="GO:0046740">
    <property type="term" value="P:transport of virus in host, cell to cell"/>
    <property type="evidence" value="ECO:0007669"/>
    <property type="project" value="UniProtKB-KW"/>
</dbReference>
<dbReference type="InterPro" id="IPR002621">
    <property type="entry name" value="Gemini_mov"/>
</dbReference>
<dbReference type="Pfam" id="PF01708">
    <property type="entry name" value="Gemini_mov"/>
    <property type="match status" value="1"/>
</dbReference>
<sequence>MDPQNALYYQPRVPTAAPTSGGVPWSRVGEVAILSFVALICFYLLYLWVLRDLILVLKARQGRSTEELIFGGQAVDRSNPIPNIPAPPSQGNPGPFVPGTG</sequence>
<organismHost>
    <name type="scientific">Avena sativa</name>
    <name type="common">Oat</name>
    <dbReference type="NCBI Taxonomy" id="4498"/>
</organismHost>
<organismHost>
    <name type="scientific">Axonopus compressus</name>
    <dbReference type="NCBI Taxonomy" id="217170"/>
</organismHost>
<organismHost>
    <name type="scientific">Cenchrus americanus</name>
    <name type="common">Pearl millet</name>
    <name type="synonym">Pennisetum glaucum</name>
    <dbReference type="NCBI Taxonomy" id="4543"/>
</organismHost>
<organismHost>
    <name type="scientific">Cenchrus polystachios</name>
    <dbReference type="NCBI Taxonomy" id="281129"/>
</organismHost>
<organismHost>
    <name type="scientific">Coix lacryma-jobi</name>
    <name type="common">Job's tears</name>
    <dbReference type="NCBI Taxonomy" id="4505"/>
</organismHost>
<organismHost>
    <name type="scientific">Dactyloctenium aegyptium</name>
    <dbReference type="NCBI Taxonomy" id="270102"/>
</organismHost>
<organismHost>
    <name type="scientific">Digitaria</name>
    <dbReference type="NCBI Taxonomy" id="66017"/>
</organismHost>
<organismHost>
    <name type="scientific">Echinochloa colona</name>
    <dbReference type="NCBI Taxonomy" id="90396"/>
</organismHost>
<organismHost>
    <name type="scientific">Eleusine coracana</name>
    <name type="common">Indian finger millet</name>
    <name type="synonym">Ragi</name>
    <dbReference type="NCBI Taxonomy" id="4511"/>
</organismHost>
<organismHost>
    <name type="scientific">Eleusine indica</name>
    <name type="common">Goosegrass</name>
    <name type="synonym">Cynosurus indicus</name>
    <dbReference type="NCBI Taxonomy" id="29674"/>
</organismHost>
<organismHost>
    <name type="scientific">Hordeum vulgare</name>
    <name type="common">Barley</name>
    <dbReference type="NCBI Taxonomy" id="4513"/>
</organismHost>
<organismHost>
    <name type="scientific">Megathyrsus maximus</name>
    <dbReference type="NCBI Taxonomy" id="59788"/>
</organismHost>
<organismHost>
    <name type="scientific">Melinis repens</name>
    <name type="common">Red Natal grass</name>
    <name type="synonym">Rhynchelytrum repens</name>
    <dbReference type="NCBI Taxonomy" id="29709"/>
</organismHost>
<organismHost>
    <name type="scientific">Oryza glaberrima</name>
    <name type="common">African rice</name>
    <dbReference type="NCBI Taxonomy" id="4538"/>
</organismHost>
<organismHost>
    <name type="scientific">Oryza sativa</name>
    <name type="common">Rice</name>
    <dbReference type="NCBI Taxonomy" id="4530"/>
</organismHost>
<organismHost>
    <name type="scientific">Paspalum conjugatum</name>
    <name type="common">Hilo grass</name>
    <dbReference type="NCBI Taxonomy" id="158143"/>
</organismHost>
<organismHost>
    <name type="scientific">Paspalum notatum</name>
    <name type="common">Bahia grass</name>
    <dbReference type="NCBI Taxonomy" id="147272"/>
</organismHost>
<organismHost>
    <name type="scientific">Paspalum scrobiculatum</name>
    <dbReference type="NCBI Taxonomy" id="173849"/>
</organismHost>
<organismHost>
    <name type="scientific">Rottboellia cochinchinensis</name>
    <dbReference type="NCBI Taxonomy" id="300125"/>
</organismHost>
<organismHost>
    <name type="scientific">Saccharum officinarum</name>
    <name type="common">Sugarcane</name>
    <dbReference type="NCBI Taxonomy" id="4547"/>
</organismHost>
<organismHost>
    <name type="scientific">Setaria barbata</name>
    <dbReference type="NCBI Taxonomy" id="192628"/>
</organismHost>
<organismHost>
    <name type="scientific">Triticum aestivum</name>
    <name type="common">Wheat</name>
    <dbReference type="NCBI Taxonomy" id="4565"/>
</organismHost>
<organismHost>
    <name type="scientific">Urochloa deflexa</name>
    <dbReference type="NCBI Taxonomy" id="240436"/>
</organismHost>
<organismHost>
    <name type="scientific">Zea mays</name>
    <name type="common">Maize</name>
    <dbReference type="NCBI Taxonomy" id="4577"/>
</organismHost>
<gene>
    <name type="ORF">V2</name>
</gene>
<evidence type="ECO:0000255" key="1"/>
<evidence type="ECO:0000256" key="2">
    <source>
        <dbReference type="SAM" id="MobiDB-lite"/>
    </source>
</evidence>
<evidence type="ECO:0000269" key="3">
    <source>
    </source>
</evidence>
<evidence type="ECO:0000305" key="4"/>
<keyword id="KW-1043">Host membrane</keyword>
<keyword id="KW-0472">Membrane</keyword>
<keyword id="KW-0812">Transmembrane</keyword>
<keyword id="KW-1133">Transmembrane helix</keyword>
<keyword id="KW-0813">Transport</keyword>
<keyword id="KW-0916">Viral movement protein</keyword>
<protein>
    <recommendedName>
        <fullName>Movement protein</fullName>
        <shortName>MP</shortName>
    </recommendedName>
</protein>
<reference key="1">
    <citation type="journal article" date="1984" name="EMBO J.">
        <title>The nucleotide sequence of maize streak virus DNA.</title>
        <authorList>
            <person name="Mullineaux P.M."/>
            <person name="Donson J."/>
            <person name="Morris-Krsinich B.A.M."/>
            <person name="Boulton M.I."/>
            <person name="Davies J.W."/>
        </authorList>
    </citation>
    <scope>NUCLEOTIDE SEQUENCE [GENOMIC DNA]</scope>
</reference>
<reference key="2">
    <citation type="journal article" date="2001" name="J. Gen. Virol.">
        <title>Interaction of the movement and coat proteins of Maize streak virus: implications for the transport of viral DNA.</title>
        <authorList>
            <person name="Liu H."/>
            <person name="Boulton M.I."/>
            <person name="Oparka K.J."/>
            <person name="Davies J.W."/>
        </authorList>
    </citation>
    <scope>INTERACTION WITH THE CAPSID PROTEIN</scope>
</reference>
<proteinExistence type="evidence at protein level"/>
<accession>P0C649</accession>
<name>MP_MSVN</name>
<feature type="chain" id="PRO_0000316926" description="Movement protein">
    <location>
        <begin position="1"/>
        <end position="101"/>
    </location>
</feature>
<feature type="transmembrane region" description="Helical" evidence="1">
    <location>
        <begin position="30"/>
        <end position="50"/>
    </location>
</feature>
<feature type="region of interest" description="Disordered" evidence="2">
    <location>
        <begin position="75"/>
        <end position="101"/>
    </location>
</feature>
<organism>
    <name type="scientific">Maize streak virus genotype A (isolate Nigeria)</name>
    <name type="common">MSV</name>
    <dbReference type="NCBI Taxonomy" id="10823"/>
    <lineage>
        <taxon>Viruses</taxon>
        <taxon>Monodnaviria</taxon>
        <taxon>Shotokuvirae</taxon>
        <taxon>Cressdnaviricota</taxon>
        <taxon>Repensiviricetes</taxon>
        <taxon>Geplafuvirales</taxon>
        <taxon>Geminiviridae</taxon>
        <taxon>Mastrevirus</taxon>
        <taxon>Maize streak virus</taxon>
    </lineage>
</organism>
<comment type="function">
    <text>Involved in the viral transport within, and between cells.</text>
</comment>
<comment type="subunit">
    <text evidence="3">Interacts with the capsid protein (CP). Part of a MP-CP-viral DNA complex.</text>
</comment>
<comment type="subcellular location">
    <subcellularLocation>
        <location evidence="4">Host membrane</location>
        <topology evidence="4">Single-pass membrane protein</topology>
    </subcellularLocation>
</comment>
<comment type="similarity">
    <text evidence="4">Belongs to the mastrevirus movement protein family.</text>
</comment>